<protein>
    <recommendedName>
        <fullName evidence="4">Cytochrome P450 monooxygenase alt1</fullName>
        <ecNumber evidence="6">1.-.-.-</ecNumber>
    </recommendedName>
    <alternativeName>
        <fullName evidence="4">Alternapyrone biosynthesis cluster protein 1</fullName>
    </alternativeName>
</protein>
<comment type="function">
    <text evidence="3">Cytochrome P450 monooxygenase; part of the gene cluster that mediates the biosynthesis of alternapyrone derivatives (PubMed:16356847). Alternapyrone is a decaketide with octa-methylation from methionine on every C2 unit except the third unit (PubMed:16356847). All the domains in the polyketide synthase alt5 are apparently involved in alternapyrone synthesis, that is, the 8 CMeT, 7 KR, 7 DH, and 4 ER reactions in the 9 KS-mediated condensation steps required for alternapyrone synthesis (PubMed:16356847). the alternapyrone produced by alt5 might be intensively modified by cytochrome P450 monooxygenases alt1, alt2 and alt3 and FAD-dependent oxidoreductase alt4 present in the alt gene cluster (PubMed:16356847).</text>
</comment>
<comment type="cofactor">
    <cofactor evidence="1">
        <name>heme</name>
        <dbReference type="ChEBI" id="CHEBI:30413"/>
    </cofactor>
</comment>
<comment type="pathway">
    <text evidence="6">Secondary metabolite biosynthesis.</text>
</comment>
<comment type="subcellular location">
    <subcellularLocation>
        <location evidence="2">Membrane</location>
        <topology evidence="2">Single-pass membrane protein</topology>
    </subcellularLocation>
</comment>
<comment type="similarity">
    <text evidence="5">Belongs to the cytochrome P450 family.</text>
</comment>
<accession>Q5KTN3</accession>
<sequence>MPAASELERRTKRSKSRNKISKPIANMLSVIAFSICISPIVYFLIRSIYYLVFHPLSDYPGPKLWAISRIPWNYVNLQGDLAWRIRDMHLHYNSSVIRIAPDELSYTSSTALKKIDGTPPPREFLKCLDGRGIAPAVVNRRRSIVTETPERHTILRRALQPAFSERALRDQEDFFRDHTDRLIAQLRKPQYGVTEQNILRWFALLSFDIMSDLAFGQPAGCLDLVDEPWLGVIGSRVKSIVWYQFAVYYRIEWILKWIMPKAAMEARKRHQALTLQKVQRRIEEERSGKREGKKRDFMSYILGNDKENLSNMDLFGMASAFIVAGSNTTTYTMTAFTFFVCRDSEVYAKVIAEVRDKFASDTDITMVAAGDLPYLKACIEETMRLSPPTPSALPRWVLEGGEEIDGKWVPGGVTVGVHNLAACHVPWNWHRPLEFIPERWLQTKEGEFTHDDRALHARFLMVDIMSLTCFLSSMAMNEMRLALAKLFWNFDISLSRNSGNWWITQKSYLVWEKKPLMVTIKPRH</sequence>
<feature type="chain" id="PRO_0000444924" description="Cytochrome P450 monooxygenase alt1">
    <location>
        <begin position="1"/>
        <end position="524"/>
    </location>
</feature>
<feature type="transmembrane region" description="Helical" evidence="2">
    <location>
        <begin position="24"/>
        <end position="44"/>
    </location>
</feature>
<feature type="binding site" description="axial binding residue" evidence="1">
    <location>
        <position position="469"/>
    </location>
    <ligand>
        <name>heme</name>
        <dbReference type="ChEBI" id="CHEBI:30413"/>
    </ligand>
    <ligandPart>
        <name>Fe</name>
        <dbReference type="ChEBI" id="CHEBI:18248"/>
    </ligandPart>
</feature>
<dbReference type="EC" id="1.-.-.-" evidence="6"/>
<dbReference type="EMBL" id="AB120221">
    <property type="protein sequence ID" value="BAD83680.1"/>
    <property type="molecule type" value="Genomic_DNA"/>
</dbReference>
<dbReference type="SMR" id="Q5KTN3"/>
<dbReference type="GO" id="GO:0016020">
    <property type="term" value="C:membrane"/>
    <property type="evidence" value="ECO:0007669"/>
    <property type="project" value="UniProtKB-SubCell"/>
</dbReference>
<dbReference type="GO" id="GO:0020037">
    <property type="term" value="F:heme binding"/>
    <property type="evidence" value="ECO:0007669"/>
    <property type="project" value="InterPro"/>
</dbReference>
<dbReference type="GO" id="GO:0005506">
    <property type="term" value="F:iron ion binding"/>
    <property type="evidence" value="ECO:0007669"/>
    <property type="project" value="InterPro"/>
</dbReference>
<dbReference type="GO" id="GO:0004497">
    <property type="term" value="F:monooxygenase activity"/>
    <property type="evidence" value="ECO:0007669"/>
    <property type="project" value="UniProtKB-KW"/>
</dbReference>
<dbReference type="GO" id="GO:0016705">
    <property type="term" value="F:oxidoreductase activity, acting on paired donors, with incorporation or reduction of molecular oxygen"/>
    <property type="evidence" value="ECO:0007669"/>
    <property type="project" value="InterPro"/>
</dbReference>
<dbReference type="CDD" id="cd11058">
    <property type="entry name" value="CYP60B-like"/>
    <property type="match status" value="1"/>
</dbReference>
<dbReference type="Gene3D" id="1.10.630.10">
    <property type="entry name" value="Cytochrome P450"/>
    <property type="match status" value="1"/>
</dbReference>
<dbReference type="InterPro" id="IPR001128">
    <property type="entry name" value="Cyt_P450"/>
</dbReference>
<dbReference type="InterPro" id="IPR002401">
    <property type="entry name" value="Cyt_P450_E_grp-I"/>
</dbReference>
<dbReference type="InterPro" id="IPR036396">
    <property type="entry name" value="Cyt_P450_sf"/>
</dbReference>
<dbReference type="InterPro" id="IPR050121">
    <property type="entry name" value="Cytochrome_P450_monoxygenase"/>
</dbReference>
<dbReference type="PANTHER" id="PTHR24305">
    <property type="entry name" value="CYTOCHROME P450"/>
    <property type="match status" value="1"/>
</dbReference>
<dbReference type="PANTHER" id="PTHR24305:SF230">
    <property type="entry name" value="P450, PUTATIVE (EUROFUNG)-RELATED"/>
    <property type="match status" value="1"/>
</dbReference>
<dbReference type="Pfam" id="PF00067">
    <property type="entry name" value="p450"/>
    <property type="match status" value="1"/>
</dbReference>
<dbReference type="PRINTS" id="PR00463">
    <property type="entry name" value="EP450I"/>
</dbReference>
<dbReference type="SUPFAM" id="SSF48264">
    <property type="entry name" value="Cytochrome P450"/>
    <property type="match status" value="1"/>
</dbReference>
<keyword id="KW-0349">Heme</keyword>
<keyword id="KW-0408">Iron</keyword>
<keyword id="KW-0472">Membrane</keyword>
<keyword id="KW-0479">Metal-binding</keyword>
<keyword id="KW-0503">Monooxygenase</keyword>
<keyword id="KW-0560">Oxidoreductase</keyword>
<keyword id="KW-0812">Transmembrane</keyword>
<keyword id="KW-1133">Transmembrane helix</keyword>
<evidence type="ECO:0000250" key="1">
    <source>
        <dbReference type="UniProtKB" id="P04798"/>
    </source>
</evidence>
<evidence type="ECO:0000255" key="2"/>
<evidence type="ECO:0000269" key="3">
    <source>
    </source>
</evidence>
<evidence type="ECO:0000303" key="4">
    <source>
    </source>
</evidence>
<evidence type="ECO:0000305" key="5"/>
<evidence type="ECO:0000305" key="6">
    <source>
    </source>
</evidence>
<gene>
    <name evidence="4" type="primary">alt1</name>
</gene>
<proteinExistence type="inferred from homology"/>
<organism>
    <name type="scientific">Alternaria solani</name>
    <dbReference type="NCBI Taxonomy" id="48100"/>
    <lineage>
        <taxon>Eukaryota</taxon>
        <taxon>Fungi</taxon>
        <taxon>Dikarya</taxon>
        <taxon>Ascomycota</taxon>
        <taxon>Pezizomycotina</taxon>
        <taxon>Dothideomycetes</taxon>
        <taxon>Pleosporomycetidae</taxon>
        <taxon>Pleosporales</taxon>
        <taxon>Pleosporineae</taxon>
        <taxon>Pleosporaceae</taxon>
        <taxon>Alternaria</taxon>
        <taxon>Alternaria sect. Porri</taxon>
    </lineage>
</organism>
<name>ALT1_ALTSO</name>
<reference key="1">
    <citation type="journal article" date="2005" name="Chem. Biol.">
        <title>An iterative type I polyketide synthase PKSN catalyzes synthesis of the decaketide alternapyrone with regio-specific octa-methylation.</title>
        <authorList>
            <person name="Fujii I."/>
            <person name="Yoshida N."/>
            <person name="Shimomaki S."/>
            <person name="Oikawa H."/>
            <person name="Ebizuka Y."/>
        </authorList>
    </citation>
    <scope>NUCLEOTIDE SEQUENCE [GENOMIC DNA]</scope>
    <scope>FUNCTION</scope>
    <source>
        <strain>584</strain>
    </source>
</reference>